<feature type="chain" id="PRO_0000192661" description="Sec-independent protein translocase protein TatB">
    <location>
        <begin position="1"/>
        <end position="131"/>
    </location>
</feature>
<feature type="transmembrane region" description="Helical" evidence="1">
    <location>
        <begin position="2"/>
        <end position="22"/>
    </location>
</feature>
<feature type="region of interest" description="Disordered" evidence="2">
    <location>
        <begin position="90"/>
        <end position="131"/>
    </location>
</feature>
<feature type="compositionally biased region" description="Basic and acidic residues" evidence="2">
    <location>
        <begin position="96"/>
        <end position="106"/>
    </location>
</feature>
<protein>
    <recommendedName>
        <fullName evidence="1">Sec-independent protein translocase protein TatB</fullName>
    </recommendedName>
</protein>
<dbReference type="EMBL" id="AL123456">
    <property type="protein sequence ID" value="CCP43980.1"/>
    <property type="molecule type" value="Genomic_DNA"/>
</dbReference>
<dbReference type="PIR" id="C70508">
    <property type="entry name" value="C70508"/>
</dbReference>
<dbReference type="RefSeq" id="NP_215740.1">
    <property type="nucleotide sequence ID" value="NC_000962.3"/>
</dbReference>
<dbReference type="RefSeq" id="WP_003898780.1">
    <property type="nucleotide sequence ID" value="NZ_NVQJ01000039.1"/>
</dbReference>
<dbReference type="SMR" id="P9WG99"/>
<dbReference type="STRING" id="83332.Rv1224"/>
<dbReference type="PaxDb" id="83332-Rv1224"/>
<dbReference type="DNASU" id="887143"/>
<dbReference type="GeneID" id="887143"/>
<dbReference type="KEGG" id="mtu:Rv1224"/>
<dbReference type="KEGG" id="mtv:RVBD_1224"/>
<dbReference type="TubercuList" id="Rv1224"/>
<dbReference type="eggNOG" id="COG1826">
    <property type="taxonomic scope" value="Bacteria"/>
</dbReference>
<dbReference type="InParanoid" id="P9WG99"/>
<dbReference type="OrthoDB" id="3267321at2"/>
<dbReference type="PhylomeDB" id="P9WG99"/>
<dbReference type="Proteomes" id="UP000001584">
    <property type="component" value="Chromosome"/>
</dbReference>
<dbReference type="GO" id="GO:0033281">
    <property type="term" value="C:TAT protein transport complex"/>
    <property type="evidence" value="ECO:0007669"/>
    <property type="project" value="UniProtKB-UniRule"/>
</dbReference>
<dbReference type="GO" id="GO:0008320">
    <property type="term" value="F:protein transmembrane transporter activity"/>
    <property type="evidence" value="ECO:0007669"/>
    <property type="project" value="UniProtKB-UniRule"/>
</dbReference>
<dbReference type="GO" id="GO:0043953">
    <property type="term" value="P:protein transport by the Tat complex"/>
    <property type="evidence" value="ECO:0007669"/>
    <property type="project" value="UniProtKB-UniRule"/>
</dbReference>
<dbReference type="Gene3D" id="1.20.5.3310">
    <property type="match status" value="1"/>
</dbReference>
<dbReference type="HAMAP" id="MF_00237">
    <property type="entry name" value="TatB"/>
    <property type="match status" value="1"/>
</dbReference>
<dbReference type="InterPro" id="IPR003369">
    <property type="entry name" value="TatA/B/E"/>
</dbReference>
<dbReference type="InterPro" id="IPR018448">
    <property type="entry name" value="TatB"/>
</dbReference>
<dbReference type="NCBIfam" id="TIGR01410">
    <property type="entry name" value="tatB"/>
    <property type="match status" value="1"/>
</dbReference>
<dbReference type="Pfam" id="PF02416">
    <property type="entry name" value="TatA_B_E"/>
    <property type="match status" value="1"/>
</dbReference>
<dbReference type="PRINTS" id="PR01506">
    <property type="entry name" value="TATBPROTEIN"/>
</dbReference>
<proteinExistence type="inferred from homology"/>
<sequence>MFANIGWWEMLVLVMVGLVVLGPERLPGAIRWAASALRQARDYLSGVTSQLREDIGPEFDDLRGHLGELQKLRGMTPRAALTKHLLDGDDSLFTGDFDRPTPKKPDAAGSAGPDATEQIGAGPIPFDSDAT</sequence>
<reference key="1">
    <citation type="journal article" date="1998" name="Nature">
        <title>Deciphering the biology of Mycobacterium tuberculosis from the complete genome sequence.</title>
        <authorList>
            <person name="Cole S.T."/>
            <person name="Brosch R."/>
            <person name="Parkhill J."/>
            <person name="Garnier T."/>
            <person name="Churcher C.M."/>
            <person name="Harris D.E."/>
            <person name="Gordon S.V."/>
            <person name="Eiglmeier K."/>
            <person name="Gas S."/>
            <person name="Barry C.E. III"/>
            <person name="Tekaia F."/>
            <person name="Badcock K."/>
            <person name="Basham D."/>
            <person name="Brown D."/>
            <person name="Chillingworth T."/>
            <person name="Connor R."/>
            <person name="Davies R.M."/>
            <person name="Devlin K."/>
            <person name="Feltwell T."/>
            <person name="Gentles S."/>
            <person name="Hamlin N."/>
            <person name="Holroyd S."/>
            <person name="Hornsby T."/>
            <person name="Jagels K."/>
            <person name="Krogh A."/>
            <person name="McLean J."/>
            <person name="Moule S."/>
            <person name="Murphy L.D."/>
            <person name="Oliver S."/>
            <person name="Osborne J."/>
            <person name="Quail M.A."/>
            <person name="Rajandream M.A."/>
            <person name="Rogers J."/>
            <person name="Rutter S."/>
            <person name="Seeger K."/>
            <person name="Skelton S."/>
            <person name="Squares S."/>
            <person name="Squares R."/>
            <person name="Sulston J.E."/>
            <person name="Taylor K."/>
            <person name="Whitehead S."/>
            <person name="Barrell B.G."/>
        </authorList>
    </citation>
    <scope>NUCLEOTIDE SEQUENCE [LARGE SCALE GENOMIC DNA]</scope>
    <source>
        <strain>ATCC 25618 / H37Rv</strain>
    </source>
</reference>
<reference key="2">
    <citation type="journal article" date="2006" name="J. Bacteriol.">
        <title>Inactivation of Rv2525c, a substrate of the twin arginine translocation (Tat) system of Mycobacterium tuberculosis, increases beta-lactam susceptibility and virulence.</title>
        <authorList>
            <person name="Saint-Joanis B."/>
            <person name="Demangel C."/>
            <person name="Jackson M."/>
            <person name="Brodin P."/>
            <person name="Marsollier L."/>
            <person name="Boshoff H."/>
            <person name="Cole S.T."/>
        </authorList>
    </citation>
    <scope>DISRUPTION PHENOTYPE</scope>
    <source>
        <strain>H37Rv</strain>
    </source>
</reference>
<keyword id="KW-1003">Cell membrane</keyword>
<keyword id="KW-0472">Membrane</keyword>
<keyword id="KW-0653">Protein transport</keyword>
<keyword id="KW-1185">Reference proteome</keyword>
<keyword id="KW-0811">Translocation</keyword>
<keyword id="KW-0812">Transmembrane</keyword>
<keyword id="KW-1133">Transmembrane helix</keyword>
<keyword id="KW-0813">Transport</keyword>
<accession>P9WG99</accession>
<accession>L0T7N2</accession>
<accession>O33220</accession>
<organism>
    <name type="scientific">Mycobacterium tuberculosis (strain ATCC 25618 / H37Rv)</name>
    <dbReference type="NCBI Taxonomy" id="83332"/>
    <lineage>
        <taxon>Bacteria</taxon>
        <taxon>Bacillati</taxon>
        <taxon>Actinomycetota</taxon>
        <taxon>Actinomycetes</taxon>
        <taxon>Mycobacteriales</taxon>
        <taxon>Mycobacteriaceae</taxon>
        <taxon>Mycobacterium</taxon>
        <taxon>Mycobacterium tuberculosis complex</taxon>
    </lineage>
</organism>
<comment type="function">
    <text evidence="1">Part of the twin-arginine translocation (Tat) system that transports large folded proteins containing a characteristic twin-arginine motif in their signal peptide across membranes. Together with TatC, TatB is part of a receptor directly interacting with Tat signal peptides. TatB may form an oligomeric binding site that transiently accommodates folded Tat precursor proteins before their translocation.</text>
</comment>
<comment type="subunit">
    <text evidence="1">The Tat system comprises two distinct complexes: a TatABC complex, containing multiple copies of TatA, TatB and TatC subunits, and a separate TatA complex, containing only TatA subunits. Substrates initially bind to the TatABC complex, which probably triggers association of the separate TatA complex to form the active translocon.</text>
</comment>
<comment type="subcellular location">
    <subcellularLocation>
        <location evidence="1">Cell membrane</location>
        <topology evidence="1">Single-pass membrane protein</topology>
    </subcellularLocation>
</comment>
<comment type="disruption phenotype">
    <text evidence="3">Essential for growth.</text>
</comment>
<comment type="similarity">
    <text evidence="1">Belongs to the TatB family.</text>
</comment>
<name>TATB_MYCTU</name>
<evidence type="ECO:0000255" key="1">
    <source>
        <dbReference type="HAMAP-Rule" id="MF_00237"/>
    </source>
</evidence>
<evidence type="ECO:0000256" key="2">
    <source>
        <dbReference type="SAM" id="MobiDB-lite"/>
    </source>
</evidence>
<evidence type="ECO:0000269" key="3">
    <source>
    </source>
</evidence>
<gene>
    <name evidence="1" type="primary">tatB</name>
    <name type="ordered locus">Rv1224</name>
    <name type="ORF">MTCI61.07</name>
</gene>